<protein>
    <recommendedName>
        <fullName>Coatomer subunit epsilon</fullName>
    </recommendedName>
    <alternativeName>
        <fullName>Epsilon-coat protein</fullName>
        <shortName>Epsilon-COP</shortName>
    </alternativeName>
</protein>
<keyword id="KW-0963">Cytoplasm</keyword>
<keyword id="KW-0968">Cytoplasmic vesicle</keyword>
<keyword id="KW-0931">ER-Golgi transport</keyword>
<keyword id="KW-0333">Golgi apparatus</keyword>
<keyword id="KW-0472">Membrane</keyword>
<keyword id="KW-0597">Phosphoprotein</keyword>
<keyword id="KW-0653">Protein transport</keyword>
<keyword id="KW-1185">Reference proteome</keyword>
<keyword id="KW-0813">Transport</keyword>
<keyword id="KW-0832">Ubl conjugation</keyword>
<proteinExistence type="evidence at transcript level"/>
<gene>
    <name type="primary">COPE</name>
</gene>
<evidence type="ECO:0000250" key="1"/>
<evidence type="ECO:0000250" key="2">
    <source>
        <dbReference type="UniProtKB" id="O14579"/>
    </source>
</evidence>
<evidence type="ECO:0000305" key="3"/>
<dbReference type="EMBL" id="CR857084">
    <property type="protein sequence ID" value="CAH89389.1"/>
    <property type="molecule type" value="mRNA"/>
</dbReference>
<dbReference type="RefSeq" id="NP_001124585.1">
    <property type="nucleotide sequence ID" value="NM_001131113.2"/>
</dbReference>
<dbReference type="SMR" id="Q5RFR8"/>
<dbReference type="FunCoup" id="Q5RFR8">
    <property type="interactions" value="3198"/>
</dbReference>
<dbReference type="STRING" id="9601.ENSPPYP00000010924"/>
<dbReference type="Ensembl" id="ENSPPYT00000011349.3">
    <property type="protein sequence ID" value="ENSPPYP00000010924.2"/>
    <property type="gene ID" value="ENSPPYG00000009753.3"/>
</dbReference>
<dbReference type="GeneID" id="100171420"/>
<dbReference type="KEGG" id="pon:100171420"/>
<dbReference type="CTD" id="11316"/>
<dbReference type="eggNOG" id="KOG3081">
    <property type="taxonomic scope" value="Eukaryota"/>
</dbReference>
<dbReference type="GeneTree" id="ENSGT00390000003478"/>
<dbReference type="HOGENOM" id="CLU_049363_0_0_1"/>
<dbReference type="InParanoid" id="Q5RFR8"/>
<dbReference type="OrthoDB" id="310217at2759"/>
<dbReference type="TreeFam" id="TF313390"/>
<dbReference type="Proteomes" id="UP000001595">
    <property type="component" value="Chromosome 19"/>
</dbReference>
<dbReference type="GO" id="GO:0030126">
    <property type="term" value="C:COPI vesicle coat"/>
    <property type="evidence" value="ECO:0007669"/>
    <property type="project" value="TreeGrafter"/>
</dbReference>
<dbReference type="GO" id="GO:0000139">
    <property type="term" value="C:Golgi membrane"/>
    <property type="evidence" value="ECO:0007669"/>
    <property type="project" value="UniProtKB-SubCell"/>
</dbReference>
<dbReference type="GO" id="GO:0005198">
    <property type="term" value="F:structural molecule activity"/>
    <property type="evidence" value="ECO:0007669"/>
    <property type="project" value="InterPro"/>
</dbReference>
<dbReference type="GO" id="GO:0006888">
    <property type="term" value="P:endoplasmic reticulum to Golgi vesicle-mediated transport"/>
    <property type="evidence" value="ECO:0007669"/>
    <property type="project" value="TreeGrafter"/>
</dbReference>
<dbReference type="GO" id="GO:0006891">
    <property type="term" value="P:intra-Golgi vesicle-mediated transport"/>
    <property type="evidence" value="ECO:0007669"/>
    <property type="project" value="TreeGrafter"/>
</dbReference>
<dbReference type="GO" id="GO:0015031">
    <property type="term" value="P:protein transport"/>
    <property type="evidence" value="ECO:0007669"/>
    <property type="project" value="UniProtKB-KW"/>
</dbReference>
<dbReference type="GO" id="GO:0006890">
    <property type="term" value="P:retrograde vesicle-mediated transport, Golgi to endoplasmic reticulum"/>
    <property type="evidence" value="ECO:0007669"/>
    <property type="project" value="InterPro"/>
</dbReference>
<dbReference type="FunFam" id="1.25.40.10:FF:000148">
    <property type="entry name" value="Coatomer subunit epsilon"/>
    <property type="match status" value="1"/>
</dbReference>
<dbReference type="Gene3D" id="1.25.40.10">
    <property type="entry name" value="Tetratricopeptide repeat domain"/>
    <property type="match status" value="1"/>
</dbReference>
<dbReference type="InterPro" id="IPR006822">
    <property type="entry name" value="Coatomer_esu"/>
</dbReference>
<dbReference type="InterPro" id="IPR011990">
    <property type="entry name" value="TPR-like_helical_dom_sf"/>
</dbReference>
<dbReference type="PANTHER" id="PTHR10805">
    <property type="entry name" value="COATOMER SUBUNIT EPSILON"/>
    <property type="match status" value="1"/>
</dbReference>
<dbReference type="PANTHER" id="PTHR10805:SF0">
    <property type="entry name" value="COATOMER SUBUNIT EPSILON"/>
    <property type="match status" value="1"/>
</dbReference>
<dbReference type="Pfam" id="PF04733">
    <property type="entry name" value="Coatomer_E"/>
    <property type="match status" value="1"/>
</dbReference>
<dbReference type="PIRSF" id="PIRSF016478">
    <property type="entry name" value="Coatomer_esu"/>
    <property type="match status" value="1"/>
</dbReference>
<dbReference type="SUPFAM" id="SSF48452">
    <property type="entry name" value="TPR-like"/>
    <property type="match status" value="1"/>
</dbReference>
<name>COPE_PONAB</name>
<reference key="1">
    <citation type="submission" date="2004-11" db="EMBL/GenBank/DDBJ databases">
        <authorList>
            <consortium name="The German cDNA consortium"/>
        </authorList>
    </citation>
    <scope>NUCLEOTIDE SEQUENCE [LARGE SCALE MRNA]</scope>
    <source>
        <tissue>Kidney</tissue>
    </source>
</reference>
<accession>Q5RFR8</accession>
<sequence>MAPPAPGPTSGGSGEVDELFDVKNAFYIGSYQQCINEAQRVKLSSPETDVERDVFLYRAYLAQRKFGVVLDEIKPSSAPELQAVRMFADYLAHESRRDSIVAELDREMSRSVDVTNTTFLLMAASIYLHDQNPDAALRALHQGDSLECTAMTVQILLKLDRLDLARKELKRMQDLDEDATLTQLATAWVSLATGGEKLQDAYYIFQEMADKCSPTLLLLNGQAACHMAQGRWEAAEGLLQEALDKDSGYPETLVNLIVLSQHLGKPPEVTNRYLSQLKDAHRSHPFIKEYQAKENDFDRLVLQYAPSA</sequence>
<feature type="chain" id="PRO_0000328665" description="Coatomer subunit epsilon">
    <location>
        <begin position="1"/>
        <end position="308"/>
    </location>
</feature>
<feature type="modified residue" description="Phosphoserine" evidence="2">
    <location>
        <position position="13"/>
    </location>
</feature>
<feature type="modified residue" description="Phosphoserine" evidence="2">
    <location>
        <position position="45"/>
    </location>
</feature>
<feature type="modified residue" description="Phosphoserine" evidence="2">
    <location>
        <position position="99"/>
    </location>
</feature>
<comment type="function">
    <text evidence="1">The coatomer is a cytosolic protein complex that binds to dilysine motifs and reversibly associates with Golgi non-clathrin-coated vesicles, which further mediate biosynthetic protein transport from the ER, via the Golgi up to the trans Golgi network. The coatomer complex is required for budding from Golgi membranes, and is essential for the retrograde Golgi-to-ER transport of dilysine-tagged proteins. In mammals, the coatomer can only be recruited by membranes associated with ADP-ribosylation factors (ARFs), which are small GTP-binding proteins; the complex also influences the Golgi structural integrity, as well as the processing, activity, and endocytic recycling of LDL receptors (By similarity).</text>
</comment>
<comment type="subunit">
    <text evidence="1">Oligomeric complex that consists of at least the alpha, beta, beta', gamma, delta, epsilon and zeta subunits.</text>
</comment>
<comment type="subcellular location">
    <subcellularLocation>
        <location evidence="1">Cytoplasm</location>
    </subcellularLocation>
    <subcellularLocation>
        <location evidence="1">Golgi apparatus membrane</location>
        <topology evidence="1">Peripheral membrane protein</topology>
        <orientation evidence="1">Cytoplasmic side</orientation>
    </subcellularLocation>
    <subcellularLocation>
        <location evidence="1">Cytoplasmic vesicle</location>
        <location evidence="1">COPI-coated vesicle membrane</location>
        <topology evidence="1">Peripheral membrane protein</topology>
        <orientation evidence="1">Cytoplasmic side</orientation>
    </subcellularLocation>
    <text evidence="1">The coatomer is cytoplasmic or polymerized on the cytoplasmic side of the Golgi, as well as on the vesicles/buds originating from it.</text>
</comment>
<comment type="PTM">
    <text evidence="1">Phosphorylated by PKA.</text>
</comment>
<comment type="PTM">
    <text evidence="1">Polyubiquitinated by RCHY1 in the presence of androgen, leading to proteasomal degradation.</text>
</comment>
<comment type="similarity">
    <text evidence="3">Belongs to the COPE family.</text>
</comment>
<organism>
    <name type="scientific">Pongo abelii</name>
    <name type="common">Sumatran orangutan</name>
    <name type="synonym">Pongo pygmaeus abelii</name>
    <dbReference type="NCBI Taxonomy" id="9601"/>
    <lineage>
        <taxon>Eukaryota</taxon>
        <taxon>Metazoa</taxon>
        <taxon>Chordata</taxon>
        <taxon>Craniata</taxon>
        <taxon>Vertebrata</taxon>
        <taxon>Euteleostomi</taxon>
        <taxon>Mammalia</taxon>
        <taxon>Eutheria</taxon>
        <taxon>Euarchontoglires</taxon>
        <taxon>Primates</taxon>
        <taxon>Haplorrhini</taxon>
        <taxon>Catarrhini</taxon>
        <taxon>Hominidae</taxon>
        <taxon>Pongo</taxon>
    </lineage>
</organism>